<keyword id="KW-0004">4Fe-4S</keyword>
<keyword id="KW-0150">Chloroplast</keyword>
<keyword id="KW-0249">Electron transport</keyword>
<keyword id="KW-0408">Iron</keyword>
<keyword id="KW-0411">Iron-sulfur</keyword>
<keyword id="KW-0472">Membrane</keyword>
<keyword id="KW-0479">Metal-binding</keyword>
<keyword id="KW-0560">Oxidoreductase</keyword>
<keyword id="KW-0602">Photosynthesis</keyword>
<keyword id="KW-0603">Photosystem I</keyword>
<keyword id="KW-0934">Plastid</keyword>
<keyword id="KW-0677">Repeat</keyword>
<keyword id="KW-0793">Thylakoid</keyword>
<keyword id="KW-0813">Transport</keyword>
<comment type="function">
    <text evidence="1">Apoprotein for the two 4Fe-4S centers FA and FB of photosystem I (PSI); essential for photochemical activity. FB is the terminal electron acceptor of PSI, donating electrons to ferredoxin. The C-terminus interacts with PsaA/B/D and helps assemble the protein into the PSI complex. Required for binding of PsaD and PsaE to PSI. PSI is a plastocyanin-ferredoxin oxidoreductase, converting photonic excitation into a charge separation, which transfers an electron from the donor P700 chlorophyll pair to the spectroscopically characterized acceptors A0, A1, FX, FA and FB in turn.</text>
</comment>
<comment type="catalytic activity">
    <reaction evidence="1">
        <text>reduced [plastocyanin] + hnu + oxidized [2Fe-2S]-[ferredoxin] = oxidized [plastocyanin] + reduced [2Fe-2S]-[ferredoxin]</text>
        <dbReference type="Rhea" id="RHEA:30407"/>
        <dbReference type="Rhea" id="RHEA-COMP:10000"/>
        <dbReference type="Rhea" id="RHEA-COMP:10001"/>
        <dbReference type="Rhea" id="RHEA-COMP:10039"/>
        <dbReference type="Rhea" id="RHEA-COMP:10040"/>
        <dbReference type="ChEBI" id="CHEBI:29036"/>
        <dbReference type="ChEBI" id="CHEBI:30212"/>
        <dbReference type="ChEBI" id="CHEBI:33737"/>
        <dbReference type="ChEBI" id="CHEBI:33738"/>
        <dbReference type="ChEBI" id="CHEBI:49552"/>
        <dbReference type="EC" id="1.97.1.12"/>
    </reaction>
</comment>
<comment type="cofactor">
    <cofactor evidence="1">
        <name>[4Fe-4S] cluster</name>
        <dbReference type="ChEBI" id="CHEBI:49883"/>
    </cofactor>
    <text evidence="1">Binds 2 [4Fe-4S] clusters. Cluster 2 is most probably the spectroscopically characterized electron acceptor FA and cluster 1 is most probably FB.</text>
</comment>
<comment type="subunit">
    <text evidence="1">The eukaryotic PSI reaction center is composed of at least 11 subunits.</text>
</comment>
<comment type="subcellular location">
    <subcellularLocation>
        <location evidence="1">Plastid</location>
        <location evidence="1">Chloroplast thylakoid membrane</location>
        <topology evidence="1">Peripheral membrane protein</topology>
        <orientation evidence="1">Stromal side</orientation>
    </subcellularLocation>
</comment>
<geneLocation type="chloroplast"/>
<dbReference type="EC" id="1.97.1.12" evidence="1"/>
<dbReference type="EMBL" id="EU342371">
    <property type="protein sequence ID" value="ABY26835.1"/>
    <property type="molecule type" value="Genomic_DNA"/>
</dbReference>
<dbReference type="EMBL" id="AP009568">
    <property type="protein sequence ID" value="BAH11183.1"/>
    <property type="molecule type" value="Genomic_DNA"/>
</dbReference>
<dbReference type="RefSeq" id="YP_001876622.1">
    <property type="nucleotide sequence ID" value="NC_010654.1"/>
</dbReference>
<dbReference type="SMR" id="B2Y205"/>
<dbReference type="GeneID" id="6276223"/>
<dbReference type="GO" id="GO:0009535">
    <property type="term" value="C:chloroplast thylakoid membrane"/>
    <property type="evidence" value="ECO:0007669"/>
    <property type="project" value="UniProtKB-SubCell"/>
</dbReference>
<dbReference type="GO" id="GO:0009522">
    <property type="term" value="C:photosystem I"/>
    <property type="evidence" value="ECO:0007669"/>
    <property type="project" value="UniProtKB-KW"/>
</dbReference>
<dbReference type="GO" id="GO:0051539">
    <property type="term" value="F:4 iron, 4 sulfur cluster binding"/>
    <property type="evidence" value="ECO:0007669"/>
    <property type="project" value="UniProtKB-KW"/>
</dbReference>
<dbReference type="GO" id="GO:0009055">
    <property type="term" value="F:electron transfer activity"/>
    <property type="evidence" value="ECO:0007669"/>
    <property type="project" value="UniProtKB-UniRule"/>
</dbReference>
<dbReference type="GO" id="GO:0046872">
    <property type="term" value="F:metal ion binding"/>
    <property type="evidence" value="ECO:0007669"/>
    <property type="project" value="UniProtKB-KW"/>
</dbReference>
<dbReference type="GO" id="GO:0016491">
    <property type="term" value="F:oxidoreductase activity"/>
    <property type="evidence" value="ECO:0007669"/>
    <property type="project" value="UniProtKB-KW"/>
</dbReference>
<dbReference type="GO" id="GO:0009773">
    <property type="term" value="P:photosynthetic electron transport in photosystem I"/>
    <property type="evidence" value="ECO:0007669"/>
    <property type="project" value="InterPro"/>
</dbReference>
<dbReference type="FunFam" id="3.30.70.20:FF:000001">
    <property type="entry name" value="Photosystem I iron-sulfur center"/>
    <property type="match status" value="1"/>
</dbReference>
<dbReference type="Gene3D" id="3.30.70.20">
    <property type="match status" value="1"/>
</dbReference>
<dbReference type="HAMAP" id="MF_01303">
    <property type="entry name" value="PSI_PsaC"/>
    <property type="match status" value="1"/>
</dbReference>
<dbReference type="InterPro" id="IPR017896">
    <property type="entry name" value="4Fe4S_Fe-S-bd"/>
</dbReference>
<dbReference type="InterPro" id="IPR017900">
    <property type="entry name" value="4Fe4S_Fe_S_CS"/>
</dbReference>
<dbReference type="InterPro" id="IPR050157">
    <property type="entry name" value="PSI_iron-sulfur_center"/>
</dbReference>
<dbReference type="InterPro" id="IPR017491">
    <property type="entry name" value="PSI_PsaC"/>
</dbReference>
<dbReference type="NCBIfam" id="TIGR03048">
    <property type="entry name" value="PS_I_psaC"/>
    <property type="match status" value="1"/>
</dbReference>
<dbReference type="PANTHER" id="PTHR24960:SF79">
    <property type="entry name" value="PHOTOSYSTEM I IRON-SULFUR CENTER"/>
    <property type="match status" value="1"/>
</dbReference>
<dbReference type="PANTHER" id="PTHR24960">
    <property type="entry name" value="PHOTOSYSTEM I IRON-SULFUR CENTER-RELATED"/>
    <property type="match status" value="1"/>
</dbReference>
<dbReference type="Pfam" id="PF12838">
    <property type="entry name" value="Fer4_7"/>
    <property type="match status" value="1"/>
</dbReference>
<dbReference type="SUPFAM" id="SSF54862">
    <property type="entry name" value="4Fe-4S ferredoxins"/>
    <property type="match status" value="1"/>
</dbReference>
<dbReference type="PROSITE" id="PS00198">
    <property type="entry name" value="4FE4S_FER_1"/>
    <property type="match status" value="2"/>
</dbReference>
<dbReference type="PROSITE" id="PS51379">
    <property type="entry name" value="4FE4S_FER_2"/>
    <property type="match status" value="2"/>
</dbReference>
<feature type="chain" id="PRO_1000165363" description="Photosystem I iron-sulfur center">
    <location>
        <begin position="1"/>
        <end position="81"/>
    </location>
</feature>
<feature type="domain" description="4Fe-4S ferredoxin-type 1" evidence="1">
    <location>
        <begin position="1"/>
        <end position="31"/>
    </location>
</feature>
<feature type="domain" description="4Fe-4S ferredoxin-type 2" evidence="1">
    <location>
        <begin position="39"/>
        <end position="68"/>
    </location>
</feature>
<feature type="binding site" evidence="1">
    <location>
        <position position="11"/>
    </location>
    <ligand>
        <name>[4Fe-4S] cluster</name>
        <dbReference type="ChEBI" id="CHEBI:49883"/>
        <label>1</label>
    </ligand>
</feature>
<feature type="binding site" evidence="1">
    <location>
        <position position="14"/>
    </location>
    <ligand>
        <name>[4Fe-4S] cluster</name>
        <dbReference type="ChEBI" id="CHEBI:49883"/>
        <label>1</label>
    </ligand>
</feature>
<feature type="binding site" evidence="1">
    <location>
        <position position="17"/>
    </location>
    <ligand>
        <name>[4Fe-4S] cluster</name>
        <dbReference type="ChEBI" id="CHEBI:49883"/>
        <label>1</label>
    </ligand>
</feature>
<feature type="binding site" evidence="1">
    <location>
        <position position="21"/>
    </location>
    <ligand>
        <name>[4Fe-4S] cluster</name>
        <dbReference type="ChEBI" id="CHEBI:49883"/>
        <label>2</label>
    </ligand>
</feature>
<feature type="binding site" evidence="1">
    <location>
        <position position="48"/>
    </location>
    <ligand>
        <name>[4Fe-4S] cluster</name>
        <dbReference type="ChEBI" id="CHEBI:49883"/>
        <label>2</label>
    </ligand>
</feature>
<feature type="binding site" evidence="1">
    <location>
        <position position="51"/>
    </location>
    <ligand>
        <name>[4Fe-4S] cluster</name>
        <dbReference type="ChEBI" id="CHEBI:49883"/>
        <label>2</label>
    </ligand>
</feature>
<feature type="binding site" evidence="1">
    <location>
        <position position="54"/>
    </location>
    <ligand>
        <name>[4Fe-4S] cluster</name>
        <dbReference type="ChEBI" id="CHEBI:49883"/>
        <label>2</label>
    </ligand>
</feature>
<feature type="binding site" evidence="1">
    <location>
        <position position="58"/>
    </location>
    <ligand>
        <name>[4Fe-4S] cluster</name>
        <dbReference type="ChEBI" id="CHEBI:49883"/>
        <label>1</label>
    </ligand>
</feature>
<reference key="1">
    <citation type="journal article" date="2008" name="BMC Evol. Biol.">
        <title>The complete plastid genome sequence of Welwitschia mirabilis: an unusually compact plastome with accelerated divergence rates.</title>
        <authorList>
            <person name="McCoy S.R."/>
            <person name="Kuehl J.V."/>
            <person name="Boore J.L."/>
            <person name="Raubeson L.A."/>
        </authorList>
    </citation>
    <scope>NUCLEOTIDE SEQUENCE [LARGE SCALE GENOMIC DNA]</scope>
</reference>
<reference key="2">
    <citation type="journal article" date="2009" name="Mol. Phylogenet. Evol.">
        <title>Evolution of reduced and compact chloroplast genomes (cpDNAs) in gnetophytes: Selection toward a lower-cost strategy.</title>
        <authorList>
            <person name="Wu C.-S."/>
            <person name="Lai Y.-T."/>
            <person name="Lin C.-P."/>
            <person name="Wang Y.-N."/>
            <person name="Chaw S.-M."/>
        </authorList>
    </citation>
    <scope>NUCLEOTIDE SEQUENCE [LARGE SCALE GENOMIC DNA]</scope>
</reference>
<organism>
    <name type="scientific">Welwitschia mirabilis</name>
    <name type="common">Tree tumbo</name>
    <name type="synonym">Welwitschia bainesii</name>
    <dbReference type="NCBI Taxonomy" id="3377"/>
    <lineage>
        <taxon>Eukaryota</taxon>
        <taxon>Viridiplantae</taxon>
        <taxon>Streptophyta</taxon>
        <taxon>Embryophyta</taxon>
        <taxon>Tracheophyta</taxon>
        <taxon>Spermatophyta</taxon>
        <taxon>Gnetopsida</taxon>
        <taxon>Gnetidae</taxon>
        <taxon>Welwitschiales</taxon>
        <taxon>Welwitschiaceae</taxon>
        <taxon>Welwitschia</taxon>
    </lineage>
</organism>
<sequence length="81" mass="9012">MAHSVKIYDTCIGCTQCVRACPTDVLEMVPWNGCRAKQIASAPRTEDCVGCKRCESACPTDYLSVRVYLRQETTRSMGLAY</sequence>
<name>PSAC_WELMI</name>
<evidence type="ECO:0000255" key="1">
    <source>
        <dbReference type="HAMAP-Rule" id="MF_01303"/>
    </source>
</evidence>
<protein>
    <recommendedName>
        <fullName evidence="1">Photosystem I iron-sulfur center</fullName>
        <ecNumber evidence="1">1.97.1.12</ecNumber>
    </recommendedName>
    <alternativeName>
        <fullName evidence="1">9 kDa polypeptide</fullName>
    </alternativeName>
    <alternativeName>
        <fullName evidence="1">PSI-C</fullName>
    </alternativeName>
    <alternativeName>
        <fullName evidence="1">Photosystem I subunit VII</fullName>
    </alternativeName>
    <alternativeName>
        <fullName evidence="1">PsaC</fullName>
    </alternativeName>
</protein>
<gene>
    <name evidence="1" type="primary">psaC</name>
</gene>
<proteinExistence type="inferred from homology"/>
<accession>B2Y205</accession>